<gene>
    <name evidence="1" type="primary">rplQ</name>
    <name type="ordered locus">RPC_3423</name>
</gene>
<proteinExistence type="inferred from homology"/>
<comment type="subunit">
    <text evidence="1">Part of the 50S ribosomal subunit. Contacts protein L32.</text>
</comment>
<comment type="similarity">
    <text evidence="1">Belongs to the bacterial ribosomal protein bL17 family.</text>
</comment>
<name>RL17_RHOPB</name>
<accession>Q211H3</accession>
<sequence>MRHGKVHRKLNRTAEHRKAMFANMCASLIKHEQIVTTLPKAKELRPIVEKLVTLGKKGGLALRRQAISEMKDQDQVRKLFDVLAKRYADRQGGYTRIIKAGFRYGDNAPMAVIEFVDRDENAKGLDSGQAEEKAA</sequence>
<reference key="1">
    <citation type="submission" date="2006-03" db="EMBL/GenBank/DDBJ databases">
        <title>Complete sequence of Rhodopseudomonas palustris BisB18.</title>
        <authorList>
            <consortium name="US DOE Joint Genome Institute"/>
            <person name="Copeland A."/>
            <person name="Lucas S."/>
            <person name="Lapidus A."/>
            <person name="Barry K."/>
            <person name="Detter J.C."/>
            <person name="Glavina del Rio T."/>
            <person name="Hammon N."/>
            <person name="Israni S."/>
            <person name="Dalin E."/>
            <person name="Tice H."/>
            <person name="Pitluck S."/>
            <person name="Chain P."/>
            <person name="Malfatti S."/>
            <person name="Shin M."/>
            <person name="Vergez L."/>
            <person name="Schmutz J."/>
            <person name="Larimer F."/>
            <person name="Land M."/>
            <person name="Hauser L."/>
            <person name="Pelletier D.A."/>
            <person name="Kyrpides N."/>
            <person name="Anderson I."/>
            <person name="Oda Y."/>
            <person name="Harwood C.S."/>
            <person name="Richardson P."/>
        </authorList>
    </citation>
    <scope>NUCLEOTIDE SEQUENCE [LARGE SCALE GENOMIC DNA]</scope>
    <source>
        <strain>BisB18</strain>
    </source>
</reference>
<organism>
    <name type="scientific">Rhodopseudomonas palustris (strain BisB18)</name>
    <dbReference type="NCBI Taxonomy" id="316056"/>
    <lineage>
        <taxon>Bacteria</taxon>
        <taxon>Pseudomonadati</taxon>
        <taxon>Pseudomonadota</taxon>
        <taxon>Alphaproteobacteria</taxon>
        <taxon>Hyphomicrobiales</taxon>
        <taxon>Nitrobacteraceae</taxon>
        <taxon>Rhodopseudomonas</taxon>
    </lineage>
</organism>
<keyword id="KW-0687">Ribonucleoprotein</keyword>
<keyword id="KW-0689">Ribosomal protein</keyword>
<protein>
    <recommendedName>
        <fullName evidence="1">Large ribosomal subunit protein bL17</fullName>
    </recommendedName>
    <alternativeName>
        <fullName evidence="2">50S ribosomal protein L17</fullName>
    </alternativeName>
</protein>
<feature type="chain" id="PRO_0000267929" description="Large ribosomal subunit protein bL17">
    <location>
        <begin position="1"/>
        <end position="135"/>
    </location>
</feature>
<evidence type="ECO:0000255" key="1">
    <source>
        <dbReference type="HAMAP-Rule" id="MF_01368"/>
    </source>
</evidence>
<evidence type="ECO:0000305" key="2"/>
<dbReference type="EMBL" id="CP000301">
    <property type="protein sequence ID" value="ABD88963.1"/>
    <property type="molecule type" value="Genomic_DNA"/>
</dbReference>
<dbReference type="SMR" id="Q211H3"/>
<dbReference type="STRING" id="316056.RPC_3423"/>
<dbReference type="KEGG" id="rpc:RPC_3423"/>
<dbReference type="eggNOG" id="COG0203">
    <property type="taxonomic scope" value="Bacteria"/>
</dbReference>
<dbReference type="HOGENOM" id="CLU_074407_2_0_5"/>
<dbReference type="OrthoDB" id="9809073at2"/>
<dbReference type="GO" id="GO:0022625">
    <property type="term" value="C:cytosolic large ribosomal subunit"/>
    <property type="evidence" value="ECO:0007669"/>
    <property type="project" value="TreeGrafter"/>
</dbReference>
<dbReference type="GO" id="GO:0003735">
    <property type="term" value="F:structural constituent of ribosome"/>
    <property type="evidence" value="ECO:0007669"/>
    <property type="project" value="InterPro"/>
</dbReference>
<dbReference type="GO" id="GO:0006412">
    <property type="term" value="P:translation"/>
    <property type="evidence" value="ECO:0007669"/>
    <property type="project" value="UniProtKB-UniRule"/>
</dbReference>
<dbReference type="FunFam" id="3.90.1030.10:FF:000001">
    <property type="entry name" value="50S ribosomal protein L17"/>
    <property type="match status" value="1"/>
</dbReference>
<dbReference type="Gene3D" id="3.90.1030.10">
    <property type="entry name" value="Ribosomal protein L17"/>
    <property type="match status" value="1"/>
</dbReference>
<dbReference type="HAMAP" id="MF_01368">
    <property type="entry name" value="Ribosomal_bL17"/>
    <property type="match status" value="1"/>
</dbReference>
<dbReference type="InterPro" id="IPR000456">
    <property type="entry name" value="Ribosomal_bL17"/>
</dbReference>
<dbReference type="InterPro" id="IPR047859">
    <property type="entry name" value="Ribosomal_bL17_CS"/>
</dbReference>
<dbReference type="InterPro" id="IPR036373">
    <property type="entry name" value="Ribosomal_bL17_sf"/>
</dbReference>
<dbReference type="NCBIfam" id="TIGR00059">
    <property type="entry name" value="L17"/>
    <property type="match status" value="1"/>
</dbReference>
<dbReference type="PANTHER" id="PTHR14413:SF16">
    <property type="entry name" value="LARGE RIBOSOMAL SUBUNIT PROTEIN BL17M"/>
    <property type="match status" value="1"/>
</dbReference>
<dbReference type="PANTHER" id="PTHR14413">
    <property type="entry name" value="RIBOSOMAL PROTEIN L17"/>
    <property type="match status" value="1"/>
</dbReference>
<dbReference type="Pfam" id="PF01196">
    <property type="entry name" value="Ribosomal_L17"/>
    <property type="match status" value="1"/>
</dbReference>
<dbReference type="SUPFAM" id="SSF64263">
    <property type="entry name" value="Prokaryotic ribosomal protein L17"/>
    <property type="match status" value="1"/>
</dbReference>
<dbReference type="PROSITE" id="PS01167">
    <property type="entry name" value="RIBOSOMAL_L17"/>
    <property type="match status" value="1"/>
</dbReference>